<protein>
    <recommendedName>
        <fullName evidence="1">Thiamine-phosphate synthase</fullName>
        <shortName evidence="1">TP synthase</shortName>
        <shortName evidence="1">TPS</shortName>
        <ecNumber evidence="1">2.5.1.3</ecNumber>
    </recommendedName>
    <alternativeName>
        <fullName evidence="1">Thiamine-phosphate pyrophosphorylase</fullName>
        <shortName evidence="1">TMP pyrophosphorylase</shortName>
        <shortName evidence="1">TMP-PPase</shortName>
    </alternativeName>
</protein>
<reference key="1">
    <citation type="journal article" date="2007" name="J. Bacteriol.">
        <title>The complete genome sequence of Bacillus thuringiensis Al Hakam.</title>
        <authorList>
            <person name="Challacombe J.F."/>
            <person name="Altherr M.R."/>
            <person name="Xie G."/>
            <person name="Bhotika S.S."/>
            <person name="Brown N."/>
            <person name="Bruce D."/>
            <person name="Campbell C.S."/>
            <person name="Campbell M.L."/>
            <person name="Chen J."/>
            <person name="Chertkov O."/>
            <person name="Cleland C."/>
            <person name="Dimitrijevic M."/>
            <person name="Doggett N.A."/>
            <person name="Fawcett J.J."/>
            <person name="Glavina T."/>
            <person name="Goodwin L.A."/>
            <person name="Green L.D."/>
            <person name="Han C.S."/>
            <person name="Hill K.K."/>
            <person name="Hitchcock P."/>
            <person name="Jackson P.J."/>
            <person name="Keim P."/>
            <person name="Kewalramani A.R."/>
            <person name="Longmire J."/>
            <person name="Lucas S."/>
            <person name="Malfatti S."/>
            <person name="Martinez D."/>
            <person name="McMurry K."/>
            <person name="Meincke L.J."/>
            <person name="Misra M."/>
            <person name="Moseman B.L."/>
            <person name="Mundt M."/>
            <person name="Munk A.C."/>
            <person name="Okinaka R.T."/>
            <person name="Parson-Quintana B."/>
            <person name="Reilly L.P."/>
            <person name="Richardson P."/>
            <person name="Robinson D.L."/>
            <person name="Saunders E."/>
            <person name="Tapia R."/>
            <person name="Tesmer J.G."/>
            <person name="Thayer N."/>
            <person name="Thompson L.S."/>
            <person name="Tice H."/>
            <person name="Ticknor L.O."/>
            <person name="Wills P.L."/>
            <person name="Gilna P."/>
            <person name="Brettin T.S."/>
        </authorList>
    </citation>
    <scope>NUCLEOTIDE SEQUENCE [LARGE SCALE GENOMIC DNA]</scope>
    <source>
        <strain>Al Hakam</strain>
    </source>
</reference>
<comment type="function">
    <text evidence="1">Condenses 4-methyl-5-(beta-hydroxyethyl)thiazole monophosphate (THZ-P) and 2-methyl-4-amino-5-hydroxymethyl pyrimidine pyrophosphate (HMP-PP) to form thiamine monophosphate (TMP).</text>
</comment>
<comment type="catalytic activity">
    <reaction evidence="1">
        <text>2-[(2R,5Z)-2-carboxy-4-methylthiazol-5(2H)-ylidene]ethyl phosphate + 4-amino-2-methyl-5-(diphosphooxymethyl)pyrimidine + 2 H(+) = thiamine phosphate + CO2 + diphosphate</text>
        <dbReference type="Rhea" id="RHEA:47844"/>
        <dbReference type="ChEBI" id="CHEBI:15378"/>
        <dbReference type="ChEBI" id="CHEBI:16526"/>
        <dbReference type="ChEBI" id="CHEBI:33019"/>
        <dbReference type="ChEBI" id="CHEBI:37575"/>
        <dbReference type="ChEBI" id="CHEBI:57841"/>
        <dbReference type="ChEBI" id="CHEBI:62899"/>
        <dbReference type="EC" id="2.5.1.3"/>
    </reaction>
</comment>
<comment type="catalytic activity">
    <reaction evidence="1">
        <text>2-(2-carboxy-4-methylthiazol-5-yl)ethyl phosphate + 4-amino-2-methyl-5-(diphosphooxymethyl)pyrimidine + 2 H(+) = thiamine phosphate + CO2 + diphosphate</text>
        <dbReference type="Rhea" id="RHEA:47848"/>
        <dbReference type="ChEBI" id="CHEBI:15378"/>
        <dbReference type="ChEBI" id="CHEBI:16526"/>
        <dbReference type="ChEBI" id="CHEBI:33019"/>
        <dbReference type="ChEBI" id="CHEBI:37575"/>
        <dbReference type="ChEBI" id="CHEBI:57841"/>
        <dbReference type="ChEBI" id="CHEBI:62890"/>
        <dbReference type="EC" id="2.5.1.3"/>
    </reaction>
</comment>
<comment type="catalytic activity">
    <reaction evidence="1">
        <text>4-methyl-5-(2-phosphooxyethyl)-thiazole + 4-amino-2-methyl-5-(diphosphooxymethyl)pyrimidine + H(+) = thiamine phosphate + diphosphate</text>
        <dbReference type="Rhea" id="RHEA:22328"/>
        <dbReference type="ChEBI" id="CHEBI:15378"/>
        <dbReference type="ChEBI" id="CHEBI:33019"/>
        <dbReference type="ChEBI" id="CHEBI:37575"/>
        <dbReference type="ChEBI" id="CHEBI:57841"/>
        <dbReference type="ChEBI" id="CHEBI:58296"/>
        <dbReference type="EC" id="2.5.1.3"/>
    </reaction>
</comment>
<comment type="cofactor">
    <cofactor evidence="1">
        <name>Mg(2+)</name>
        <dbReference type="ChEBI" id="CHEBI:18420"/>
    </cofactor>
    <text evidence="1">Binds 1 Mg(2+) ion per subunit.</text>
</comment>
<comment type="pathway">
    <text evidence="1">Cofactor biosynthesis; thiamine diphosphate biosynthesis; thiamine phosphate from 4-amino-2-methyl-5-diphosphomethylpyrimidine and 4-methyl-5-(2-phosphoethyl)-thiazole: step 1/1.</text>
</comment>
<comment type="similarity">
    <text evidence="1">Belongs to the thiamine-phosphate synthase family.</text>
</comment>
<sequence length="219" mass="23498">MSRISKAEMSKLLSVYFIMGSNNCTKDPLQVLREALEGGITIFQFREKGEGALTGEERICFAKELQAICKEYGVPFIVNDDVELALELDADGVHVGQDDEGITSVREKMGDKIVGVSTHTIEEARWAIENGADYLGVGPIFPTSTKKDTKAVQGTKGLAHFREQGITIPIVGIGGISIENTASVIEAGADGVSVISAISLAESSYESTKKLVEEVSRSL</sequence>
<gene>
    <name evidence="1" type="primary">thiE</name>
    <name type="ordered locus">BALH_0375</name>
</gene>
<feature type="chain" id="PRO_1000008123" description="Thiamine-phosphate synthase">
    <location>
        <begin position="1"/>
        <end position="219"/>
    </location>
</feature>
<feature type="binding site" evidence="1">
    <location>
        <begin position="44"/>
        <end position="48"/>
    </location>
    <ligand>
        <name>4-amino-2-methyl-5-(diphosphooxymethyl)pyrimidine</name>
        <dbReference type="ChEBI" id="CHEBI:57841"/>
    </ligand>
</feature>
<feature type="binding site" evidence="1">
    <location>
        <position position="79"/>
    </location>
    <ligand>
        <name>4-amino-2-methyl-5-(diphosphooxymethyl)pyrimidine</name>
        <dbReference type="ChEBI" id="CHEBI:57841"/>
    </ligand>
</feature>
<feature type="binding site" evidence="1">
    <location>
        <position position="80"/>
    </location>
    <ligand>
        <name>Mg(2+)</name>
        <dbReference type="ChEBI" id="CHEBI:18420"/>
    </ligand>
</feature>
<feature type="binding site" evidence="1">
    <location>
        <position position="99"/>
    </location>
    <ligand>
        <name>Mg(2+)</name>
        <dbReference type="ChEBI" id="CHEBI:18420"/>
    </ligand>
</feature>
<feature type="binding site" evidence="1">
    <location>
        <position position="117"/>
    </location>
    <ligand>
        <name>4-amino-2-methyl-5-(diphosphooxymethyl)pyrimidine</name>
        <dbReference type="ChEBI" id="CHEBI:57841"/>
    </ligand>
</feature>
<feature type="binding site" evidence="1">
    <location>
        <begin position="143"/>
        <end position="145"/>
    </location>
    <ligand>
        <name>2-[(2R,5Z)-2-carboxy-4-methylthiazol-5(2H)-ylidene]ethyl phosphate</name>
        <dbReference type="ChEBI" id="CHEBI:62899"/>
    </ligand>
</feature>
<feature type="binding site" evidence="1">
    <location>
        <position position="146"/>
    </location>
    <ligand>
        <name>4-amino-2-methyl-5-(diphosphooxymethyl)pyrimidine</name>
        <dbReference type="ChEBI" id="CHEBI:57841"/>
    </ligand>
</feature>
<feature type="binding site" evidence="1">
    <location>
        <position position="175"/>
    </location>
    <ligand>
        <name>2-[(2R,5Z)-2-carboxy-4-methylthiazol-5(2H)-ylidene]ethyl phosphate</name>
        <dbReference type="ChEBI" id="CHEBI:62899"/>
    </ligand>
</feature>
<feature type="binding site" evidence="1">
    <location>
        <begin position="195"/>
        <end position="196"/>
    </location>
    <ligand>
        <name>2-[(2R,5Z)-2-carboxy-4-methylthiazol-5(2H)-ylidene]ethyl phosphate</name>
        <dbReference type="ChEBI" id="CHEBI:62899"/>
    </ligand>
</feature>
<organism>
    <name type="scientific">Bacillus thuringiensis (strain Al Hakam)</name>
    <dbReference type="NCBI Taxonomy" id="412694"/>
    <lineage>
        <taxon>Bacteria</taxon>
        <taxon>Bacillati</taxon>
        <taxon>Bacillota</taxon>
        <taxon>Bacilli</taxon>
        <taxon>Bacillales</taxon>
        <taxon>Bacillaceae</taxon>
        <taxon>Bacillus</taxon>
        <taxon>Bacillus cereus group</taxon>
    </lineage>
</organism>
<name>THIE_BACAH</name>
<proteinExistence type="inferred from homology"/>
<dbReference type="EC" id="2.5.1.3" evidence="1"/>
<dbReference type="EMBL" id="CP000485">
    <property type="protein sequence ID" value="ABK83774.1"/>
    <property type="molecule type" value="Genomic_DNA"/>
</dbReference>
<dbReference type="RefSeq" id="WP_000086983.1">
    <property type="nucleotide sequence ID" value="NC_008600.1"/>
</dbReference>
<dbReference type="SMR" id="A0R981"/>
<dbReference type="KEGG" id="btl:BALH_0375"/>
<dbReference type="HOGENOM" id="CLU_018272_3_2_9"/>
<dbReference type="UniPathway" id="UPA00060">
    <property type="reaction ID" value="UER00141"/>
</dbReference>
<dbReference type="GO" id="GO:0005737">
    <property type="term" value="C:cytoplasm"/>
    <property type="evidence" value="ECO:0007669"/>
    <property type="project" value="TreeGrafter"/>
</dbReference>
<dbReference type="GO" id="GO:0000287">
    <property type="term" value="F:magnesium ion binding"/>
    <property type="evidence" value="ECO:0007669"/>
    <property type="project" value="UniProtKB-UniRule"/>
</dbReference>
<dbReference type="GO" id="GO:0004789">
    <property type="term" value="F:thiamine-phosphate diphosphorylase activity"/>
    <property type="evidence" value="ECO:0007669"/>
    <property type="project" value="UniProtKB-UniRule"/>
</dbReference>
<dbReference type="GO" id="GO:0009228">
    <property type="term" value="P:thiamine biosynthetic process"/>
    <property type="evidence" value="ECO:0007669"/>
    <property type="project" value="UniProtKB-KW"/>
</dbReference>
<dbReference type="GO" id="GO:0009229">
    <property type="term" value="P:thiamine diphosphate biosynthetic process"/>
    <property type="evidence" value="ECO:0007669"/>
    <property type="project" value="UniProtKB-UniRule"/>
</dbReference>
<dbReference type="CDD" id="cd00564">
    <property type="entry name" value="TMP_TenI"/>
    <property type="match status" value="1"/>
</dbReference>
<dbReference type="FunFam" id="3.20.20.70:FF:000096">
    <property type="entry name" value="Thiamine-phosphate synthase"/>
    <property type="match status" value="1"/>
</dbReference>
<dbReference type="Gene3D" id="3.20.20.70">
    <property type="entry name" value="Aldolase class I"/>
    <property type="match status" value="1"/>
</dbReference>
<dbReference type="HAMAP" id="MF_00097">
    <property type="entry name" value="TMP_synthase"/>
    <property type="match status" value="1"/>
</dbReference>
<dbReference type="InterPro" id="IPR013785">
    <property type="entry name" value="Aldolase_TIM"/>
</dbReference>
<dbReference type="InterPro" id="IPR036206">
    <property type="entry name" value="ThiamineP_synth_sf"/>
</dbReference>
<dbReference type="InterPro" id="IPR022998">
    <property type="entry name" value="ThiamineP_synth_TenI"/>
</dbReference>
<dbReference type="InterPro" id="IPR034291">
    <property type="entry name" value="TMP_synthase"/>
</dbReference>
<dbReference type="NCBIfam" id="TIGR00693">
    <property type="entry name" value="thiE"/>
    <property type="match status" value="1"/>
</dbReference>
<dbReference type="PANTHER" id="PTHR20857">
    <property type="entry name" value="THIAMINE-PHOSPHATE PYROPHOSPHORYLASE"/>
    <property type="match status" value="1"/>
</dbReference>
<dbReference type="PANTHER" id="PTHR20857:SF15">
    <property type="entry name" value="THIAMINE-PHOSPHATE SYNTHASE"/>
    <property type="match status" value="1"/>
</dbReference>
<dbReference type="Pfam" id="PF02581">
    <property type="entry name" value="TMP-TENI"/>
    <property type="match status" value="1"/>
</dbReference>
<dbReference type="SUPFAM" id="SSF51391">
    <property type="entry name" value="Thiamin phosphate synthase"/>
    <property type="match status" value="1"/>
</dbReference>
<accession>A0R981</accession>
<evidence type="ECO:0000255" key="1">
    <source>
        <dbReference type="HAMAP-Rule" id="MF_00097"/>
    </source>
</evidence>
<keyword id="KW-0460">Magnesium</keyword>
<keyword id="KW-0479">Metal-binding</keyword>
<keyword id="KW-0784">Thiamine biosynthesis</keyword>
<keyword id="KW-0808">Transferase</keyword>